<gene>
    <name evidence="1" type="primary">hisF</name>
    <name type="ordered locus">Veis_4378</name>
</gene>
<comment type="function">
    <text evidence="1">IGPS catalyzes the conversion of PRFAR and glutamine to IGP, AICAR and glutamate. The HisF subunit catalyzes the cyclization activity that produces IGP and AICAR from PRFAR using the ammonia provided by the HisH subunit.</text>
</comment>
<comment type="catalytic activity">
    <reaction evidence="1">
        <text>5-[(5-phospho-1-deoxy-D-ribulos-1-ylimino)methylamino]-1-(5-phospho-beta-D-ribosyl)imidazole-4-carboxamide + L-glutamine = D-erythro-1-(imidazol-4-yl)glycerol 3-phosphate + 5-amino-1-(5-phospho-beta-D-ribosyl)imidazole-4-carboxamide + L-glutamate + H(+)</text>
        <dbReference type="Rhea" id="RHEA:24793"/>
        <dbReference type="ChEBI" id="CHEBI:15378"/>
        <dbReference type="ChEBI" id="CHEBI:29985"/>
        <dbReference type="ChEBI" id="CHEBI:58278"/>
        <dbReference type="ChEBI" id="CHEBI:58359"/>
        <dbReference type="ChEBI" id="CHEBI:58475"/>
        <dbReference type="ChEBI" id="CHEBI:58525"/>
        <dbReference type="EC" id="4.3.2.10"/>
    </reaction>
</comment>
<comment type="pathway">
    <text evidence="1">Amino-acid biosynthesis; L-histidine biosynthesis; L-histidine from 5-phospho-alpha-D-ribose 1-diphosphate: step 5/9.</text>
</comment>
<comment type="subunit">
    <text evidence="1">Heterodimer of HisH and HisF.</text>
</comment>
<comment type="subcellular location">
    <subcellularLocation>
        <location evidence="1">Cytoplasm</location>
    </subcellularLocation>
</comment>
<comment type="similarity">
    <text evidence="1">Belongs to the HisA/HisF family.</text>
</comment>
<protein>
    <recommendedName>
        <fullName evidence="1">Imidazole glycerol phosphate synthase subunit HisF</fullName>
        <ecNumber evidence="1">4.3.2.10</ecNumber>
    </recommendedName>
    <alternativeName>
        <fullName evidence="1">IGP synthase cyclase subunit</fullName>
    </alternativeName>
    <alternativeName>
        <fullName evidence="1">IGP synthase subunit HisF</fullName>
    </alternativeName>
    <alternativeName>
        <fullName evidence="1">ImGP synthase subunit HisF</fullName>
        <shortName evidence="1">IGPS subunit HisF</shortName>
    </alternativeName>
</protein>
<proteinExistence type="inferred from homology"/>
<feature type="chain" id="PRO_1000063170" description="Imidazole glycerol phosphate synthase subunit HisF">
    <location>
        <begin position="1"/>
        <end position="266"/>
    </location>
</feature>
<feature type="active site" evidence="1">
    <location>
        <position position="11"/>
    </location>
</feature>
<feature type="active site" evidence="1">
    <location>
        <position position="130"/>
    </location>
</feature>
<keyword id="KW-0028">Amino-acid biosynthesis</keyword>
<keyword id="KW-0963">Cytoplasm</keyword>
<keyword id="KW-0368">Histidine biosynthesis</keyword>
<keyword id="KW-0456">Lyase</keyword>
<keyword id="KW-1185">Reference proteome</keyword>
<organism>
    <name type="scientific">Verminephrobacter eiseniae (strain EF01-2)</name>
    <dbReference type="NCBI Taxonomy" id="391735"/>
    <lineage>
        <taxon>Bacteria</taxon>
        <taxon>Pseudomonadati</taxon>
        <taxon>Pseudomonadota</taxon>
        <taxon>Betaproteobacteria</taxon>
        <taxon>Burkholderiales</taxon>
        <taxon>Comamonadaceae</taxon>
        <taxon>Verminephrobacter</taxon>
    </lineage>
</organism>
<evidence type="ECO:0000255" key="1">
    <source>
        <dbReference type="HAMAP-Rule" id="MF_01013"/>
    </source>
</evidence>
<name>HIS6_VEREI</name>
<dbReference type="EC" id="4.3.2.10" evidence="1"/>
<dbReference type="EMBL" id="CP000542">
    <property type="protein sequence ID" value="ABM60081.1"/>
    <property type="molecule type" value="Genomic_DNA"/>
</dbReference>
<dbReference type="RefSeq" id="WP_011812067.1">
    <property type="nucleotide sequence ID" value="NC_008786.1"/>
</dbReference>
<dbReference type="SMR" id="A1WR24"/>
<dbReference type="STRING" id="391735.Veis_4378"/>
<dbReference type="GeneID" id="76462695"/>
<dbReference type="KEGG" id="vei:Veis_4378"/>
<dbReference type="eggNOG" id="COG0107">
    <property type="taxonomic scope" value="Bacteria"/>
</dbReference>
<dbReference type="HOGENOM" id="CLU_048577_4_0_4"/>
<dbReference type="OrthoDB" id="9781903at2"/>
<dbReference type="UniPathway" id="UPA00031">
    <property type="reaction ID" value="UER00010"/>
</dbReference>
<dbReference type="Proteomes" id="UP000000374">
    <property type="component" value="Chromosome"/>
</dbReference>
<dbReference type="GO" id="GO:0005737">
    <property type="term" value="C:cytoplasm"/>
    <property type="evidence" value="ECO:0007669"/>
    <property type="project" value="UniProtKB-SubCell"/>
</dbReference>
<dbReference type="GO" id="GO:0000107">
    <property type="term" value="F:imidazoleglycerol-phosphate synthase activity"/>
    <property type="evidence" value="ECO:0007669"/>
    <property type="project" value="UniProtKB-UniRule"/>
</dbReference>
<dbReference type="GO" id="GO:0016829">
    <property type="term" value="F:lyase activity"/>
    <property type="evidence" value="ECO:0007669"/>
    <property type="project" value="UniProtKB-KW"/>
</dbReference>
<dbReference type="GO" id="GO:0000105">
    <property type="term" value="P:L-histidine biosynthetic process"/>
    <property type="evidence" value="ECO:0007669"/>
    <property type="project" value="UniProtKB-UniRule"/>
</dbReference>
<dbReference type="CDD" id="cd04731">
    <property type="entry name" value="HisF"/>
    <property type="match status" value="1"/>
</dbReference>
<dbReference type="FunFam" id="3.20.20.70:FF:000006">
    <property type="entry name" value="Imidazole glycerol phosphate synthase subunit HisF"/>
    <property type="match status" value="1"/>
</dbReference>
<dbReference type="Gene3D" id="3.20.20.70">
    <property type="entry name" value="Aldolase class I"/>
    <property type="match status" value="1"/>
</dbReference>
<dbReference type="HAMAP" id="MF_01013">
    <property type="entry name" value="HisF"/>
    <property type="match status" value="1"/>
</dbReference>
<dbReference type="InterPro" id="IPR013785">
    <property type="entry name" value="Aldolase_TIM"/>
</dbReference>
<dbReference type="InterPro" id="IPR006062">
    <property type="entry name" value="His_biosynth"/>
</dbReference>
<dbReference type="InterPro" id="IPR004651">
    <property type="entry name" value="HisF"/>
</dbReference>
<dbReference type="InterPro" id="IPR050064">
    <property type="entry name" value="IGPS_HisA/HisF"/>
</dbReference>
<dbReference type="InterPro" id="IPR011060">
    <property type="entry name" value="RibuloseP-bd_barrel"/>
</dbReference>
<dbReference type="NCBIfam" id="TIGR00735">
    <property type="entry name" value="hisF"/>
    <property type="match status" value="1"/>
</dbReference>
<dbReference type="PANTHER" id="PTHR21235:SF2">
    <property type="entry name" value="IMIDAZOLE GLYCEROL PHOSPHATE SYNTHASE HISHF"/>
    <property type="match status" value="1"/>
</dbReference>
<dbReference type="PANTHER" id="PTHR21235">
    <property type="entry name" value="IMIDAZOLE GLYCEROL PHOSPHATE SYNTHASE SUBUNIT HISF/H IGP SYNTHASE SUBUNIT HISF/H"/>
    <property type="match status" value="1"/>
</dbReference>
<dbReference type="Pfam" id="PF00977">
    <property type="entry name" value="His_biosynth"/>
    <property type="match status" value="1"/>
</dbReference>
<dbReference type="SUPFAM" id="SSF51366">
    <property type="entry name" value="Ribulose-phoshate binding barrel"/>
    <property type="match status" value="1"/>
</dbReference>
<reference key="1">
    <citation type="submission" date="2006-12" db="EMBL/GenBank/DDBJ databases">
        <title>Complete sequence of chromosome 1 of Verminephrobacter eiseniae EF01-2.</title>
        <authorList>
            <person name="Copeland A."/>
            <person name="Lucas S."/>
            <person name="Lapidus A."/>
            <person name="Barry K."/>
            <person name="Detter J.C."/>
            <person name="Glavina del Rio T."/>
            <person name="Dalin E."/>
            <person name="Tice H."/>
            <person name="Pitluck S."/>
            <person name="Chertkov O."/>
            <person name="Brettin T."/>
            <person name="Bruce D."/>
            <person name="Han C."/>
            <person name="Tapia R."/>
            <person name="Gilna P."/>
            <person name="Schmutz J."/>
            <person name="Larimer F."/>
            <person name="Land M."/>
            <person name="Hauser L."/>
            <person name="Kyrpides N."/>
            <person name="Kim E."/>
            <person name="Stahl D."/>
            <person name="Richardson P."/>
        </authorList>
    </citation>
    <scope>NUCLEOTIDE SEQUENCE [LARGE SCALE GENOMIC DNA]</scope>
    <source>
        <strain>EF01-2</strain>
    </source>
</reference>
<accession>A1WR24</accession>
<sequence>MLTKRIIACLDVTGGRVVKGVNFVGLRDAGDPVAVAARYNAQGADELAFLDITATSDERDLILPIIEAVASQVFIPLTVGGGVRTQADVRRLLNAGADKVSFNSAAIADPQVIDTASAKYGAQCIVVAIDARRRSAEESRRITAGGRAIGPGWDVYSHGGRRNTGLDALAWAVEMQRRGAGEILLTSMDRDGTRIGFDLELTRAVSDAVGLPVIASGGVGTLDHLADGIQTGGADAVLAASIFHYGEYTVGQAKQHLAGRGIAVRR</sequence>